<comment type="function">
    <text>Growth hormone plays an important role in growth control and is involved in the regulation of several anabolic processes. Implicated as an osmoregulatory substance important for seawater adaptation.</text>
</comment>
<comment type="subcellular location">
    <subcellularLocation>
        <location>Secreted</location>
    </subcellularLocation>
</comment>
<comment type="similarity">
    <text evidence="3">Belongs to the somatotropin/prolactin family.</text>
</comment>
<organism>
    <name type="scientific">Oncorhynchus kisutch</name>
    <name type="common">Coho salmon</name>
    <name type="synonym">Salmo kisutch</name>
    <dbReference type="NCBI Taxonomy" id="8019"/>
    <lineage>
        <taxon>Eukaryota</taxon>
        <taxon>Metazoa</taxon>
        <taxon>Chordata</taxon>
        <taxon>Craniata</taxon>
        <taxon>Vertebrata</taxon>
        <taxon>Euteleostomi</taxon>
        <taxon>Actinopterygii</taxon>
        <taxon>Neopterygii</taxon>
        <taxon>Teleostei</taxon>
        <taxon>Protacanthopterygii</taxon>
        <taxon>Salmoniformes</taxon>
        <taxon>Salmonidae</taxon>
        <taxon>Salmoninae</taxon>
        <taxon>Oncorhynchus</taxon>
    </lineage>
</organism>
<evidence type="ECO:0000250" key="1"/>
<evidence type="ECO:0000269" key="2">
    <source>
    </source>
</evidence>
<evidence type="ECO:0000305" key="3"/>
<reference key="1">
    <citation type="journal article" date="1988" name="Gene">
        <title>Molecular cloning and sequencing of coho salmon growth hormone cDNA.</title>
        <authorList>
            <person name="Gonzalez-Villasenor L.I."/>
            <person name="Zhang P."/>
            <person name="Chen T.T."/>
            <person name="Powers D.A."/>
        </authorList>
    </citation>
    <scope>NUCLEOTIDE SEQUENCE [MRNA]</scope>
</reference>
<reference key="2">
    <citation type="journal article" date="1987" name="Gen. Comp. Endocrinol.">
        <title>The primary structure of coho salmon growth hormone and its cDNA.</title>
        <authorList>
            <person name="Nicoll C.S."/>
            <person name="Steiny S.S."/>
            <person name="King D.S."/>
            <person name="Nishioka R.S."/>
            <person name="Mayer G.L."/>
            <person name="Eberhardt N.L."/>
            <person name="Baxter J.D."/>
            <person name="Yamanaka M.K."/>
            <person name="Miller J.A."/>
            <person name="Seilhamer J.J."/>
        </authorList>
    </citation>
    <scope>NUCLEOTIDE SEQUENCE [MRNA]</scope>
    <scope>PROTEIN SEQUENCE OF 23-64</scope>
</reference>
<keyword id="KW-0903">Direct protein sequencing</keyword>
<keyword id="KW-1015">Disulfide bond</keyword>
<keyword id="KW-0372">Hormone</keyword>
<keyword id="KW-0479">Metal-binding</keyword>
<keyword id="KW-1185">Reference proteome</keyword>
<keyword id="KW-0964">Secreted</keyword>
<keyword id="KW-0732">Signal</keyword>
<keyword id="KW-0862">Zinc</keyword>
<name>SOMA_ONCKI</name>
<protein>
    <recommendedName>
        <fullName>Somatotropin</fullName>
    </recommendedName>
    <alternativeName>
        <fullName>Growth hormone</fullName>
    </alternativeName>
</protein>
<gene>
    <name type="primary">gh</name>
</gene>
<feature type="signal peptide" evidence="2">
    <location>
        <begin position="1"/>
        <end position="22"/>
    </location>
</feature>
<feature type="chain" id="PRO_0000033034" description="Somatotropin">
    <location>
        <begin position="23"/>
        <end position="210"/>
    </location>
</feature>
<feature type="binding site" evidence="1">
    <location>
        <position position="38"/>
    </location>
    <ligand>
        <name>Zn(2+)</name>
        <dbReference type="ChEBI" id="CHEBI:29105"/>
    </ligand>
</feature>
<feature type="binding site" evidence="1">
    <location>
        <position position="192"/>
    </location>
    <ligand>
        <name>Zn(2+)</name>
        <dbReference type="ChEBI" id="CHEBI:29105"/>
    </ligand>
</feature>
<feature type="disulfide bond" evidence="1">
    <location>
        <begin position="71"/>
        <end position="183"/>
    </location>
</feature>
<feature type="disulfide bond" evidence="1">
    <location>
        <begin position="200"/>
        <end position="208"/>
    </location>
</feature>
<accession>P10607</accession>
<proteinExistence type="evidence at protein level"/>
<sequence length="210" mass="23765">MGQVFLLMPVLLVSCFLSQGAAIENQRLFNIAVSRVQHLHLLAQKMFNDFDGTLLPDERRQLNKIFLLDFCNSDSIVSPVDKHETQKSSVLKLLHISFRLIESWEYPSQTLIISNSLLVGNANQISEKLSDLKVGINLLIMGSQDGLLSLDDNDSQQLPRYGNYYQNPGGDGNVRRNYELLACFKKDMHKVETYLTVAKCRKSLEANCTL</sequence>
<dbReference type="EMBL" id="M19999">
    <property type="protein sequence ID" value="AAA49402.1"/>
    <property type="molecule type" value="mRNA"/>
</dbReference>
<dbReference type="PIR" id="JT0305">
    <property type="entry name" value="STONC"/>
</dbReference>
<dbReference type="SMR" id="P10607"/>
<dbReference type="Proteomes" id="UP000694557">
    <property type="component" value="Unplaced"/>
</dbReference>
<dbReference type="GO" id="GO:0005615">
    <property type="term" value="C:extracellular space"/>
    <property type="evidence" value="ECO:0007669"/>
    <property type="project" value="InterPro"/>
</dbReference>
<dbReference type="GO" id="GO:0070186">
    <property type="term" value="F:growth hormone activity"/>
    <property type="evidence" value="ECO:0007669"/>
    <property type="project" value="TreeGrafter"/>
</dbReference>
<dbReference type="GO" id="GO:0005131">
    <property type="term" value="F:growth hormone receptor binding"/>
    <property type="evidence" value="ECO:0007669"/>
    <property type="project" value="InterPro"/>
</dbReference>
<dbReference type="GO" id="GO:0046872">
    <property type="term" value="F:metal ion binding"/>
    <property type="evidence" value="ECO:0007669"/>
    <property type="project" value="UniProtKB-KW"/>
</dbReference>
<dbReference type="GO" id="GO:0048513">
    <property type="term" value="P:animal organ development"/>
    <property type="evidence" value="ECO:0007669"/>
    <property type="project" value="TreeGrafter"/>
</dbReference>
<dbReference type="GO" id="GO:0055074">
    <property type="term" value="P:calcium ion homeostasis"/>
    <property type="evidence" value="ECO:0000250"/>
    <property type="project" value="AgBase"/>
</dbReference>
<dbReference type="GO" id="GO:0060396">
    <property type="term" value="P:growth hormone receptor signaling pathway"/>
    <property type="evidence" value="ECO:0007669"/>
    <property type="project" value="TreeGrafter"/>
</dbReference>
<dbReference type="GO" id="GO:0042538">
    <property type="term" value="P:hyperosmotic salinity response"/>
    <property type="evidence" value="ECO:0000250"/>
    <property type="project" value="AgBase"/>
</dbReference>
<dbReference type="GO" id="GO:0010960">
    <property type="term" value="P:magnesium ion homeostasis"/>
    <property type="evidence" value="ECO:0000250"/>
    <property type="project" value="AgBase"/>
</dbReference>
<dbReference type="GO" id="GO:0045927">
    <property type="term" value="P:positive regulation of growth"/>
    <property type="evidence" value="ECO:0007669"/>
    <property type="project" value="TreeGrafter"/>
</dbReference>
<dbReference type="GO" id="GO:0050766">
    <property type="term" value="P:positive regulation of phagocytosis"/>
    <property type="evidence" value="ECO:0000250"/>
    <property type="project" value="AgBase"/>
</dbReference>
<dbReference type="GO" id="GO:0046427">
    <property type="term" value="P:positive regulation of receptor signaling pathway via JAK-STAT"/>
    <property type="evidence" value="ECO:0007669"/>
    <property type="project" value="TreeGrafter"/>
</dbReference>
<dbReference type="GO" id="GO:0032930">
    <property type="term" value="P:positive regulation of superoxide anion generation"/>
    <property type="evidence" value="ECO:0000250"/>
    <property type="project" value="AgBase"/>
</dbReference>
<dbReference type="GO" id="GO:0002637">
    <property type="term" value="P:regulation of immunoglobulin production"/>
    <property type="evidence" value="ECO:0000250"/>
    <property type="project" value="AgBase"/>
</dbReference>
<dbReference type="GO" id="GO:0031667">
    <property type="term" value="P:response to nutrient levels"/>
    <property type="evidence" value="ECO:0007669"/>
    <property type="project" value="TreeGrafter"/>
</dbReference>
<dbReference type="GO" id="GO:0055078">
    <property type="term" value="P:sodium ion homeostasis"/>
    <property type="evidence" value="ECO:0000250"/>
    <property type="project" value="AgBase"/>
</dbReference>
<dbReference type="CDD" id="cd10285">
    <property type="entry name" value="somatotropin_like"/>
    <property type="match status" value="1"/>
</dbReference>
<dbReference type="FunFam" id="1.20.1250.10:FF:000009">
    <property type="entry name" value="Growth hormone"/>
    <property type="match status" value="1"/>
</dbReference>
<dbReference type="Gene3D" id="1.20.1250.10">
    <property type="match status" value="1"/>
</dbReference>
<dbReference type="InterPro" id="IPR009079">
    <property type="entry name" value="4_helix_cytokine-like_core"/>
</dbReference>
<dbReference type="InterPro" id="IPR034975">
    <property type="entry name" value="Somatotropin"/>
</dbReference>
<dbReference type="InterPro" id="IPR001400">
    <property type="entry name" value="Somatotropin/Prolactin"/>
</dbReference>
<dbReference type="InterPro" id="IPR018116">
    <property type="entry name" value="Somatotropin_CS"/>
</dbReference>
<dbReference type="PANTHER" id="PTHR11417:SF2">
    <property type="entry name" value="SOMATOTROPIN"/>
    <property type="match status" value="1"/>
</dbReference>
<dbReference type="PANTHER" id="PTHR11417">
    <property type="entry name" value="SOMATOTROPIN,PROLACTIN"/>
    <property type="match status" value="1"/>
</dbReference>
<dbReference type="Pfam" id="PF00103">
    <property type="entry name" value="Hormone_1"/>
    <property type="match status" value="1"/>
</dbReference>
<dbReference type="PRINTS" id="PR00836">
    <property type="entry name" value="SOMATOTROPIN"/>
</dbReference>
<dbReference type="SUPFAM" id="SSF47266">
    <property type="entry name" value="4-helical cytokines"/>
    <property type="match status" value="1"/>
</dbReference>
<dbReference type="PROSITE" id="PS00266">
    <property type="entry name" value="SOMATOTROPIN_1"/>
    <property type="match status" value="1"/>
</dbReference>
<dbReference type="PROSITE" id="PS00338">
    <property type="entry name" value="SOMATOTROPIN_2"/>
    <property type="match status" value="1"/>
</dbReference>